<gene>
    <name evidence="1" type="primary">rplP</name>
    <name type="ordered locus">Shew185_0203</name>
</gene>
<sequence>MLQPKRMKFRKMFKGRNRGLANGTEVSFGTFGLKAVGRGRLTARQIESARRAMTRHIKRQGQIWIRVFPDKPITSKPLEVRMGKGKGNVEYWVCQIQPGKVLYEMNGVSEVIAREAFALAAAKLPIKTTFVTKTVM</sequence>
<organism>
    <name type="scientific">Shewanella baltica (strain OS185)</name>
    <dbReference type="NCBI Taxonomy" id="402882"/>
    <lineage>
        <taxon>Bacteria</taxon>
        <taxon>Pseudomonadati</taxon>
        <taxon>Pseudomonadota</taxon>
        <taxon>Gammaproteobacteria</taxon>
        <taxon>Alteromonadales</taxon>
        <taxon>Shewanellaceae</taxon>
        <taxon>Shewanella</taxon>
    </lineage>
</organism>
<protein>
    <recommendedName>
        <fullName evidence="1">Large ribosomal subunit protein uL16</fullName>
    </recommendedName>
    <alternativeName>
        <fullName evidence="2">50S ribosomal protein L16</fullName>
    </alternativeName>
</protein>
<feature type="chain" id="PRO_1000054700" description="Large ribosomal subunit protein uL16">
    <location>
        <begin position="1"/>
        <end position="136"/>
    </location>
</feature>
<keyword id="KW-0687">Ribonucleoprotein</keyword>
<keyword id="KW-0689">Ribosomal protein</keyword>
<keyword id="KW-0694">RNA-binding</keyword>
<keyword id="KW-0699">rRNA-binding</keyword>
<keyword id="KW-0820">tRNA-binding</keyword>
<proteinExistence type="inferred from homology"/>
<dbReference type="EMBL" id="CP000753">
    <property type="protein sequence ID" value="ABS06374.1"/>
    <property type="molecule type" value="Genomic_DNA"/>
</dbReference>
<dbReference type="RefSeq" id="WP_006083593.1">
    <property type="nucleotide sequence ID" value="NC_009665.1"/>
</dbReference>
<dbReference type="SMR" id="A6WHT5"/>
<dbReference type="GeneID" id="94726193"/>
<dbReference type="KEGG" id="sbm:Shew185_0203"/>
<dbReference type="HOGENOM" id="CLU_078858_2_1_6"/>
<dbReference type="GO" id="GO:0022625">
    <property type="term" value="C:cytosolic large ribosomal subunit"/>
    <property type="evidence" value="ECO:0007669"/>
    <property type="project" value="TreeGrafter"/>
</dbReference>
<dbReference type="GO" id="GO:0019843">
    <property type="term" value="F:rRNA binding"/>
    <property type="evidence" value="ECO:0007669"/>
    <property type="project" value="UniProtKB-UniRule"/>
</dbReference>
<dbReference type="GO" id="GO:0003735">
    <property type="term" value="F:structural constituent of ribosome"/>
    <property type="evidence" value="ECO:0007669"/>
    <property type="project" value="InterPro"/>
</dbReference>
<dbReference type="GO" id="GO:0000049">
    <property type="term" value="F:tRNA binding"/>
    <property type="evidence" value="ECO:0007669"/>
    <property type="project" value="UniProtKB-KW"/>
</dbReference>
<dbReference type="GO" id="GO:0006412">
    <property type="term" value="P:translation"/>
    <property type="evidence" value="ECO:0007669"/>
    <property type="project" value="UniProtKB-UniRule"/>
</dbReference>
<dbReference type="CDD" id="cd01433">
    <property type="entry name" value="Ribosomal_L16_L10e"/>
    <property type="match status" value="1"/>
</dbReference>
<dbReference type="FunFam" id="3.90.1170.10:FF:000001">
    <property type="entry name" value="50S ribosomal protein L16"/>
    <property type="match status" value="1"/>
</dbReference>
<dbReference type="Gene3D" id="3.90.1170.10">
    <property type="entry name" value="Ribosomal protein L10e/L16"/>
    <property type="match status" value="1"/>
</dbReference>
<dbReference type="HAMAP" id="MF_01342">
    <property type="entry name" value="Ribosomal_uL16"/>
    <property type="match status" value="1"/>
</dbReference>
<dbReference type="InterPro" id="IPR047873">
    <property type="entry name" value="Ribosomal_uL16"/>
</dbReference>
<dbReference type="InterPro" id="IPR000114">
    <property type="entry name" value="Ribosomal_uL16_bact-type"/>
</dbReference>
<dbReference type="InterPro" id="IPR020798">
    <property type="entry name" value="Ribosomal_uL16_CS"/>
</dbReference>
<dbReference type="InterPro" id="IPR016180">
    <property type="entry name" value="Ribosomal_uL16_dom"/>
</dbReference>
<dbReference type="InterPro" id="IPR036920">
    <property type="entry name" value="Ribosomal_uL16_sf"/>
</dbReference>
<dbReference type="NCBIfam" id="TIGR01164">
    <property type="entry name" value="rplP_bact"/>
    <property type="match status" value="1"/>
</dbReference>
<dbReference type="PANTHER" id="PTHR12220">
    <property type="entry name" value="50S/60S RIBOSOMAL PROTEIN L16"/>
    <property type="match status" value="1"/>
</dbReference>
<dbReference type="PANTHER" id="PTHR12220:SF13">
    <property type="entry name" value="LARGE RIBOSOMAL SUBUNIT PROTEIN UL16M"/>
    <property type="match status" value="1"/>
</dbReference>
<dbReference type="Pfam" id="PF00252">
    <property type="entry name" value="Ribosomal_L16"/>
    <property type="match status" value="1"/>
</dbReference>
<dbReference type="PRINTS" id="PR00060">
    <property type="entry name" value="RIBOSOMALL16"/>
</dbReference>
<dbReference type="SUPFAM" id="SSF54686">
    <property type="entry name" value="Ribosomal protein L16p/L10e"/>
    <property type="match status" value="1"/>
</dbReference>
<dbReference type="PROSITE" id="PS00586">
    <property type="entry name" value="RIBOSOMAL_L16_1"/>
    <property type="match status" value="1"/>
</dbReference>
<dbReference type="PROSITE" id="PS00701">
    <property type="entry name" value="RIBOSOMAL_L16_2"/>
    <property type="match status" value="1"/>
</dbReference>
<evidence type="ECO:0000255" key="1">
    <source>
        <dbReference type="HAMAP-Rule" id="MF_01342"/>
    </source>
</evidence>
<evidence type="ECO:0000305" key="2"/>
<comment type="function">
    <text evidence="1">Binds 23S rRNA and is also seen to make contacts with the A and possibly P site tRNAs.</text>
</comment>
<comment type="subunit">
    <text evidence="1">Part of the 50S ribosomal subunit.</text>
</comment>
<comment type="similarity">
    <text evidence="1">Belongs to the universal ribosomal protein uL16 family.</text>
</comment>
<reference key="1">
    <citation type="submission" date="2007-07" db="EMBL/GenBank/DDBJ databases">
        <title>Complete sequence of chromosome of Shewanella baltica OS185.</title>
        <authorList>
            <consortium name="US DOE Joint Genome Institute"/>
            <person name="Copeland A."/>
            <person name="Lucas S."/>
            <person name="Lapidus A."/>
            <person name="Barry K."/>
            <person name="Glavina del Rio T."/>
            <person name="Dalin E."/>
            <person name="Tice H."/>
            <person name="Pitluck S."/>
            <person name="Sims D."/>
            <person name="Brettin T."/>
            <person name="Bruce D."/>
            <person name="Detter J.C."/>
            <person name="Han C."/>
            <person name="Schmutz J."/>
            <person name="Larimer F."/>
            <person name="Land M."/>
            <person name="Hauser L."/>
            <person name="Kyrpides N."/>
            <person name="Mikhailova N."/>
            <person name="Brettar I."/>
            <person name="Rodrigues J."/>
            <person name="Konstantinidis K."/>
            <person name="Tiedje J."/>
            <person name="Richardson P."/>
        </authorList>
    </citation>
    <scope>NUCLEOTIDE SEQUENCE [LARGE SCALE GENOMIC DNA]</scope>
    <source>
        <strain>OS185</strain>
    </source>
</reference>
<accession>A6WHT5</accession>
<name>RL16_SHEB8</name>